<accession>Q8XYN9</accession>
<protein>
    <recommendedName>
        <fullName evidence="1">Glucose-6-phosphate isomerase</fullName>
        <shortName evidence="1">GPI</shortName>
        <ecNumber evidence="1">5.3.1.9</ecNumber>
    </recommendedName>
    <alternativeName>
        <fullName evidence="1">Phosphoglucose isomerase</fullName>
        <shortName evidence="1">PGI</shortName>
    </alternativeName>
    <alternativeName>
        <fullName evidence="1">Phosphohexose isomerase</fullName>
        <shortName evidence="1">PHI</shortName>
    </alternativeName>
</protein>
<feature type="chain" id="PRO_0000180717" description="Glucose-6-phosphate isomerase">
    <location>
        <begin position="1"/>
        <end position="539"/>
    </location>
</feature>
<feature type="active site" description="Proton donor" evidence="1">
    <location>
        <position position="353"/>
    </location>
</feature>
<feature type="active site" evidence="1">
    <location>
        <position position="384"/>
    </location>
</feature>
<feature type="active site" evidence="1">
    <location>
        <position position="505"/>
    </location>
</feature>
<dbReference type="EC" id="5.3.1.9" evidence="1"/>
<dbReference type="EMBL" id="AL646052">
    <property type="protein sequence ID" value="CAD15421.1"/>
    <property type="molecule type" value="Genomic_DNA"/>
</dbReference>
<dbReference type="RefSeq" id="WP_011001658.1">
    <property type="nucleotide sequence ID" value="NC_003295.1"/>
</dbReference>
<dbReference type="SMR" id="Q8XYN9"/>
<dbReference type="STRING" id="267608.RSc1719"/>
<dbReference type="EnsemblBacteria" id="CAD15421">
    <property type="protein sequence ID" value="CAD15421"/>
    <property type="gene ID" value="RSc1719"/>
</dbReference>
<dbReference type="KEGG" id="rso:RSc1719"/>
<dbReference type="PATRIC" id="fig|267608.8.peg.1763"/>
<dbReference type="eggNOG" id="COG0166">
    <property type="taxonomic scope" value="Bacteria"/>
</dbReference>
<dbReference type="HOGENOM" id="CLU_017947_3_1_4"/>
<dbReference type="UniPathway" id="UPA00109">
    <property type="reaction ID" value="UER00181"/>
</dbReference>
<dbReference type="UniPathway" id="UPA00138"/>
<dbReference type="Proteomes" id="UP000001436">
    <property type="component" value="Chromosome"/>
</dbReference>
<dbReference type="GO" id="GO:0005829">
    <property type="term" value="C:cytosol"/>
    <property type="evidence" value="ECO:0007669"/>
    <property type="project" value="TreeGrafter"/>
</dbReference>
<dbReference type="GO" id="GO:0097367">
    <property type="term" value="F:carbohydrate derivative binding"/>
    <property type="evidence" value="ECO:0007669"/>
    <property type="project" value="InterPro"/>
</dbReference>
<dbReference type="GO" id="GO:0004347">
    <property type="term" value="F:glucose-6-phosphate isomerase activity"/>
    <property type="evidence" value="ECO:0007669"/>
    <property type="project" value="UniProtKB-UniRule"/>
</dbReference>
<dbReference type="GO" id="GO:0048029">
    <property type="term" value="F:monosaccharide binding"/>
    <property type="evidence" value="ECO:0007669"/>
    <property type="project" value="TreeGrafter"/>
</dbReference>
<dbReference type="GO" id="GO:0006094">
    <property type="term" value="P:gluconeogenesis"/>
    <property type="evidence" value="ECO:0007669"/>
    <property type="project" value="UniProtKB-UniRule"/>
</dbReference>
<dbReference type="GO" id="GO:0051156">
    <property type="term" value="P:glucose 6-phosphate metabolic process"/>
    <property type="evidence" value="ECO:0007669"/>
    <property type="project" value="TreeGrafter"/>
</dbReference>
<dbReference type="GO" id="GO:0006096">
    <property type="term" value="P:glycolytic process"/>
    <property type="evidence" value="ECO:0007669"/>
    <property type="project" value="UniProtKB-UniRule"/>
</dbReference>
<dbReference type="CDD" id="cd05015">
    <property type="entry name" value="SIS_PGI_1"/>
    <property type="match status" value="1"/>
</dbReference>
<dbReference type="CDD" id="cd05016">
    <property type="entry name" value="SIS_PGI_2"/>
    <property type="match status" value="1"/>
</dbReference>
<dbReference type="FunFam" id="3.40.50.10490:FF:000018">
    <property type="entry name" value="Glucose-6-phosphate isomerase"/>
    <property type="match status" value="1"/>
</dbReference>
<dbReference type="Gene3D" id="1.10.1390.10">
    <property type="match status" value="1"/>
</dbReference>
<dbReference type="Gene3D" id="3.40.50.10490">
    <property type="entry name" value="Glucose-6-phosphate isomerase like protein, domain 1"/>
    <property type="match status" value="2"/>
</dbReference>
<dbReference type="HAMAP" id="MF_00473">
    <property type="entry name" value="G6P_isomerase"/>
    <property type="match status" value="1"/>
</dbReference>
<dbReference type="InterPro" id="IPR001672">
    <property type="entry name" value="G6P_Isomerase"/>
</dbReference>
<dbReference type="InterPro" id="IPR023096">
    <property type="entry name" value="G6P_Isomerase_C"/>
</dbReference>
<dbReference type="InterPro" id="IPR018189">
    <property type="entry name" value="Phosphoglucose_isomerase_CS"/>
</dbReference>
<dbReference type="InterPro" id="IPR046348">
    <property type="entry name" value="SIS_dom_sf"/>
</dbReference>
<dbReference type="InterPro" id="IPR035476">
    <property type="entry name" value="SIS_PGI_1"/>
</dbReference>
<dbReference type="InterPro" id="IPR035482">
    <property type="entry name" value="SIS_PGI_2"/>
</dbReference>
<dbReference type="NCBIfam" id="NF001211">
    <property type="entry name" value="PRK00179.1"/>
    <property type="match status" value="1"/>
</dbReference>
<dbReference type="PANTHER" id="PTHR11469">
    <property type="entry name" value="GLUCOSE-6-PHOSPHATE ISOMERASE"/>
    <property type="match status" value="1"/>
</dbReference>
<dbReference type="PANTHER" id="PTHR11469:SF1">
    <property type="entry name" value="GLUCOSE-6-PHOSPHATE ISOMERASE"/>
    <property type="match status" value="1"/>
</dbReference>
<dbReference type="Pfam" id="PF00342">
    <property type="entry name" value="PGI"/>
    <property type="match status" value="1"/>
</dbReference>
<dbReference type="PRINTS" id="PR00662">
    <property type="entry name" value="G6PISOMERASE"/>
</dbReference>
<dbReference type="SUPFAM" id="SSF53697">
    <property type="entry name" value="SIS domain"/>
    <property type="match status" value="1"/>
</dbReference>
<dbReference type="PROSITE" id="PS00765">
    <property type="entry name" value="P_GLUCOSE_ISOMERASE_1"/>
    <property type="match status" value="1"/>
</dbReference>
<dbReference type="PROSITE" id="PS00174">
    <property type="entry name" value="P_GLUCOSE_ISOMERASE_2"/>
    <property type="match status" value="1"/>
</dbReference>
<dbReference type="PROSITE" id="PS51463">
    <property type="entry name" value="P_GLUCOSE_ISOMERASE_3"/>
    <property type="match status" value="1"/>
</dbReference>
<gene>
    <name evidence="1" type="primary">pgi</name>
    <name type="ordered locus">RSc1719</name>
    <name type="ORF">RS02909</name>
</gene>
<comment type="function">
    <text evidence="1">Catalyzes the reversible isomerization of glucose-6-phosphate to fructose-6-phosphate.</text>
</comment>
<comment type="catalytic activity">
    <reaction evidence="1">
        <text>alpha-D-glucose 6-phosphate = beta-D-fructose 6-phosphate</text>
        <dbReference type="Rhea" id="RHEA:11816"/>
        <dbReference type="ChEBI" id="CHEBI:57634"/>
        <dbReference type="ChEBI" id="CHEBI:58225"/>
        <dbReference type="EC" id="5.3.1.9"/>
    </reaction>
</comment>
<comment type="pathway">
    <text evidence="1">Carbohydrate biosynthesis; gluconeogenesis.</text>
</comment>
<comment type="pathway">
    <text evidence="1">Carbohydrate degradation; glycolysis; D-glyceraldehyde 3-phosphate and glycerone phosphate from D-glucose: step 2/4.</text>
</comment>
<comment type="subcellular location">
    <subcellularLocation>
        <location evidence="1">Cytoplasm</location>
    </subcellularLocation>
</comment>
<comment type="similarity">
    <text evidence="1">Belongs to the GPI family.</text>
</comment>
<organism>
    <name type="scientific">Ralstonia nicotianae (strain ATCC BAA-1114 / GMI1000)</name>
    <name type="common">Ralstonia solanacearum</name>
    <dbReference type="NCBI Taxonomy" id="267608"/>
    <lineage>
        <taxon>Bacteria</taxon>
        <taxon>Pseudomonadati</taxon>
        <taxon>Pseudomonadota</taxon>
        <taxon>Betaproteobacteria</taxon>
        <taxon>Burkholderiales</taxon>
        <taxon>Burkholderiaceae</taxon>
        <taxon>Ralstonia</taxon>
        <taxon>Ralstonia solanacearum species complex</taxon>
    </lineage>
</organism>
<keyword id="KW-0963">Cytoplasm</keyword>
<keyword id="KW-0312">Gluconeogenesis</keyword>
<keyword id="KW-0324">Glycolysis</keyword>
<keyword id="KW-0413">Isomerase</keyword>
<keyword id="KW-1185">Reference proteome</keyword>
<name>G6PI_RALN1</name>
<evidence type="ECO:0000255" key="1">
    <source>
        <dbReference type="HAMAP-Rule" id="MF_00473"/>
    </source>
</evidence>
<sequence>MPTALPAWQSLSQHAQAIRATHMRDWFAAPDAEQRVHAFTVEAAGLTLDYAKNRITPETLALLLQLADEAGVLTLRDAMLRGERINNTEHRSVLHAALRGHAEDDYRANGAAVMPDVLRVRAQMRDFAQRVHSGTWTGHAGQRITDVVNIGIGGSDLGPRMVCRALAHLAVPQVRVHFVSNVDGTDLAETLAGLNPDTTLAIVCSKTFTTLETMANAHSMRRWFIEHGVPEAQLKQHFVAVSTNRDAVVAFGIDPDNMFTFWDWVGGRFSLWSAVGLSIVLAIGPEQFETMLDGARAMDRHFASAAPRENMPLILGLLSVWYRGFFGAASACTVPYCAPLELLTDFMQQLEMESNGKSVQRNGAAIGTDTGPIVWGTAGTNGQHAYFQLIHQGSQIVPVDFITTLEPVRSLPGHHTKLLANCFAQGEALLRGRTAEEVRADGITDAALVPHMVFEGNRPSNTILMQRLDAASLGALIACAEHRTFVQGAVWNINSFDQWGVELGKKLAKPILEELEGAPASVAHDASTAALIRRAKAAR</sequence>
<reference key="1">
    <citation type="journal article" date="2002" name="Nature">
        <title>Genome sequence of the plant pathogen Ralstonia solanacearum.</title>
        <authorList>
            <person name="Salanoubat M."/>
            <person name="Genin S."/>
            <person name="Artiguenave F."/>
            <person name="Gouzy J."/>
            <person name="Mangenot S."/>
            <person name="Arlat M."/>
            <person name="Billault A."/>
            <person name="Brottier P."/>
            <person name="Camus J.-C."/>
            <person name="Cattolico L."/>
            <person name="Chandler M."/>
            <person name="Choisne N."/>
            <person name="Claudel-Renard C."/>
            <person name="Cunnac S."/>
            <person name="Demange N."/>
            <person name="Gaspin C."/>
            <person name="Lavie M."/>
            <person name="Moisan A."/>
            <person name="Robert C."/>
            <person name="Saurin W."/>
            <person name="Schiex T."/>
            <person name="Siguier P."/>
            <person name="Thebault P."/>
            <person name="Whalen M."/>
            <person name="Wincker P."/>
            <person name="Levy M."/>
            <person name="Weissenbach J."/>
            <person name="Boucher C.A."/>
        </authorList>
    </citation>
    <scope>NUCLEOTIDE SEQUENCE [LARGE SCALE GENOMIC DNA]</scope>
    <source>
        <strain>ATCC BAA-1114 / GMI1000</strain>
    </source>
</reference>
<proteinExistence type="inferred from homology"/>